<accession>B8EEJ1</accession>
<comment type="function">
    <text evidence="1">Catalyzes the formation of acetyl phosphate from acetate and ATP. Can also catalyze the reverse reaction.</text>
</comment>
<comment type="catalytic activity">
    <reaction evidence="1">
        <text>acetate + ATP = acetyl phosphate + ADP</text>
        <dbReference type="Rhea" id="RHEA:11352"/>
        <dbReference type="ChEBI" id="CHEBI:22191"/>
        <dbReference type="ChEBI" id="CHEBI:30089"/>
        <dbReference type="ChEBI" id="CHEBI:30616"/>
        <dbReference type="ChEBI" id="CHEBI:456216"/>
        <dbReference type="EC" id="2.7.2.1"/>
    </reaction>
</comment>
<comment type="cofactor">
    <cofactor evidence="1">
        <name>Mg(2+)</name>
        <dbReference type="ChEBI" id="CHEBI:18420"/>
    </cofactor>
    <cofactor evidence="1">
        <name>Mn(2+)</name>
        <dbReference type="ChEBI" id="CHEBI:29035"/>
    </cofactor>
    <text evidence="1">Mg(2+). Can also accept Mn(2+).</text>
</comment>
<comment type="pathway">
    <text evidence="1">Metabolic intermediate biosynthesis; acetyl-CoA biosynthesis; acetyl-CoA from acetate: step 1/2.</text>
</comment>
<comment type="subunit">
    <text evidence="1">Homodimer.</text>
</comment>
<comment type="subcellular location">
    <subcellularLocation>
        <location evidence="1">Cytoplasm</location>
    </subcellularLocation>
</comment>
<comment type="similarity">
    <text evidence="1">Belongs to the acetokinase family.</text>
</comment>
<name>ACKA_SHEB2</name>
<reference key="1">
    <citation type="submission" date="2008-12" db="EMBL/GenBank/DDBJ databases">
        <title>Complete sequence of chromosome of Shewanella baltica OS223.</title>
        <authorList>
            <consortium name="US DOE Joint Genome Institute"/>
            <person name="Lucas S."/>
            <person name="Copeland A."/>
            <person name="Lapidus A."/>
            <person name="Glavina del Rio T."/>
            <person name="Dalin E."/>
            <person name="Tice H."/>
            <person name="Bruce D."/>
            <person name="Goodwin L."/>
            <person name="Pitluck S."/>
            <person name="Chertkov O."/>
            <person name="Meincke L."/>
            <person name="Brettin T."/>
            <person name="Detter J.C."/>
            <person name="Han C."/>
            <person name="Kuske C.R."/>
            <person name="Larimer F."/>
            <person name="Land M."/>
            <person name="Hauser L."/>
            <person name="Kyrpides N."/>
            <person name="Ovchinnikova G."/>
            <person name="Brettar I."/>
            <person name="Rodrigues J."/>
            <person name="Konstantinidis K."/>
            <person name="Tiedje J."/>
        </authorList>
    </citation>
    <scope>NUCLEOTIDE SEQUENCE [LARGE SCALE GENOMIC DNA]</scope>
    <source>
        <strain>OS223</strain>
    </source>
</reference>
<sequence>MSNNLVLVLNCGSSSLKFAVIDAQTGDDQISGLAECFGLEDSRIKWKINGEKHEAALGAFTAHREAVEYIVNKILAEQPELAAKIQAVGHRIVHGGEKFTRSVIIDESVIKGIEDCASLAPLHNPAHLIGIRAAIASFPKLPQVAVFDTAFHQSMPDRAYVYALPYKLYREHGIRRYGMHGTSHLFVSREAAKMLNKPIEETNVICAHLGNGASVTAIKGGKSVDTSMGLTPLEGLVMGTRCGDIDPSIIYHLVHQLGYTLEEVNNLMNKQSGLLGISELTNDCRGIEEGYADGHKGATLALEIFCYRLAKYIASYTVPLGRLDAVVFTGGIGENSDLIREKVLNMLEIFNFHVDSERNKAARFGKKGIITQDKGTIAMVIPTNEEWVIAEDSIKLINK</sequence>
<organism>
    <name type="scientific">Shewanella baltica (strain OS223)</name>
    <dbReference type="NCBI Taxonomy" id="407976"/>
    <lineage>
        <taxon>Bacteria</taxon>
        <taxon>Pseudomonadati</taxon>
        <taxon>Pseudomonadota</taxon>
        <taxon>Gammaproteobacteria</taxon>
        <taxon>Alteromonadales</taxon>
        <taxon>Shewanellaceae</taxon>
        <taxon>Shewanella</taxon>
    </lineage>
</organism>
<protein>
    <recommendedName>
        <fullName evidence="1">Acetate kinase</fullName>
        <ecNumber evidence="1">2.7.2.1</ecNumber>
    </recommendedName>
    <alternativeName>
        <fullName evidence="1">Acetokinase</fullName>
    </alternativeName>
</protein>
<proteinExistence type="inferred from homology"/>
<evidence type="ECO:0000255" key="1">
    <source>
        <dbReference type="HAMAP-Rule" id="MF_00020"/>
    </source>
</evidence>
<gene>
    <name evidence="1" type="primary">ackA</name>
    <name type="ordered locus">Sbal223_1691</name>
</gene>
<keyword id="KW-0067">ATP-binding</keyword>
<keyword id="KW-0963">Cytoplasm</keyword>
<keyword id="KW-0418">Kinase</keyword>
<keyword id="KW-0460">Magnesium</keyword>
<keyword id="KW-0479">Metal-binding</keyword>
<keyword id="KW-0547">Nucleotide-binding</keyword>
<keyword id="KW-0808">Transferase</keyword>
<dbReference type="EC" id="2.7.2.1" evidence="1"/>
<dbReference type="EMBL" id="CP001252">
    <property type="protein sequence ID" value="ACK46196.1"/>
    <property type="molecule type" value="Genomic_DNA"/>
</dbReference>
<dbReference type="RefSeq" id="WP_006082161.1">
    <property type="nucleotide sequence ID" value="NC_011663.1"/>
</dbReference>
<dbReference type="SMR" id="B8EEJ1"/>
<dbReference type="GeneID" id="11772866"/>
<dbReference type="KEGG" id="sbp:Sbal223_1691"/>
<dbReference type="HOGENOM" id="CLU_020352_0_1_6"/>
<dbReference type="UniPathway" id="UPA00340">
    <property type="reaction ID" value="UER00458"/>
</dbReference>
<dbReference type="Proteomes" id="UP000002507">
    <property type="component" value="Chromosome"/>
</dbReference>
<dbReference type="GO" id="GO:0005829">
    <property type="term" value="C:cytosol"/>
    <property type="evidence" value="ECO:0007669"/>
    <property type="project" value="TreeGrafter"/>
</dbReference>
<dbReference type="GO" id="GO:0008776">
    <property type="term" value="F:acetate kinase activity"/>
    <property type="evidence" value="ECO:0007669"/>
    <property type="project" value="UniProtKB-UniRule"/>
</dbReference>
<dbReference type="GO" id="GO:0005524">
    <property type="term" value="F:ATP binding"/>
    <property type="evidence" value="ECO:0007669"/>
    <property type="project" value="UniProtKB-KW"/>
</dbReference>
<dbReference type="GO" id="GO:0000287">
    <property type="term" value="F:magnesium ion binding"/>
    <property type="evidence" value="ECO:0007669"/>
    <property type="project" value="UniProtKB-UniRule"/>
</dbReference>
<dbReference type="GO" id="GO:0006083">
    <property type="term" value="P:acetate metabolic process"/>
    <property type="evidence" value="ECO:0007669"/>
    <property type="project" value="TreeGrafter"/>
</dbReference>
<dbReference type="GO" id="GO:0006085">
    <property type="term" value="P:acetyl-CoA biosynthetic process"/>
    <property type="evidence" value="ECO:0007669"/>
    <property type="project" value="UniProtKB-UniRule"/>
</dbReference>
<dbReference type="CDD" id="cd24010">
    <property type="entry name" value="ASKHA_NBD_AcK_PK"/>
    <property type="match status" value="1"/>
</dbReference>
<dbReference type="FunFam" id="3.30.420.40:FF:000041">
    <property type="entry name" value="Acetate kinase"/>
    <property type="match status" value="1"/>
</dbReference>
<dbReference type="Gene3D" id="3.30.420.40">
    <property type="match status" value="2"/>
</dbReference>
<dbReference type="HAMAP" id="MF_00020">
    <property type="entry name" value="Acetate_kinase"/>
    <property type="match status" value="1"/>
</dbReference>
<dbReference type="InterPro" id="IPR004372">
    <property type="entry name" value="Ac/propionate_kinase"/>
</dbReference>
<dbReference type="InterPro" id="IPR000890">
    <property type="entry name" value="Aliphatic_acid_kin_short-chain"/>
</dbReference>
<dbReference type="InterPro" id="IPR023865">
    <property type="entry name" value="Aliphatic_acid_kinase_CS"/>
</dbReference>
<dbReference type="InterPro" id="IPR043129">
    <property type="entry name" value="ATPase_NBD"/>
</dbReference>
<dbReference type="NCBIfam" id="TIGR00016">
    <property type="entry name" value="ackA"/>
    <property type="match status" value="1"/>
</dbReference>
<dbReference type="PANTHER" id="PTHR21060">
    <property type="entry name" value="ACETATE KINASE"/>
    <property type="match status" value="1"/>
</dbReference>
<dbReference type="PANTHER" id="PTHR21060:SF21">
    <property type="entry name" value="ACETATE KINASE"/>
    <property type="match status" value="1"/>
</dbReference>
<dbReference type="Pfam" id="PF00871">
    <property type="entry name" value="Acetate_kinase"/>
    <property type="match status" value="1"/>
</dbReference>
<dbReference type="PIRSF" id="PIRSF000722">
    <property type="entry name" value="Acetate_prop_kin"/>
    <property type="match status" value="1"/>
</dbReference>
<dbReference type="PRINTS" id="PR00471">
    <property type="entry name" value="ACETATEKNASE"/>
</dbReference>
<dbReference type="SUPFAM" id="SSF53067">
    <property type="entry name" value="Actin-like ATPase domain"/>
    <property type="match status" value="2"/>
</dbReference>
<dbReference type="PROSITE" id="PS01075">
    <property type="entry name" value="ACETATE_KINASE_1"/>
    <property type="match status" value="1"/>
</dbReference>
<dbReference type="PROSITE" id="PS01076">
    <property type="entry name" value="ACETATE_KINASE_2"/>
    <property type="match status" value="1"/>
</dbReference>
<feature type="chain" id="PRO_1000116807" description="Acetate kinase">
    <location>
        <begin position="1"/>
        <end position="399"/>
    </location>
</feature>
<feature type="active site" description="Proton donor/acceptor" evidence="1">
    <location>
        <position position="148"/>
    </location>
</feature>
<feature type="binding site" evidence="1">
    <location>
        <position position="10"/>
    </location>
    <ligand>
        <name>Mg(2+)</name>
        <dbReference type="ChEBI" id="CHEBI:18420"/>
    </ligand>
</feature>
<feature type="binding site" evidence="1">
    <location>
        <position position="17"/>
    </location>
    <ligand>
        <name>ATP</name>
        <dbReference type="ChEBI" id="CHEBI:30616"/>
    </ligand>
</feature>
<feature type="binding site" evidence="1">
    <location>
        <position position="91"/>
    </location>
    <ligand>
        <name>substrate</name>
    </ligand>
</feature>
<feature type="binding site" evidence="1">
    <location>
        <begin position="208"/>
        <end position="212"/>
    </location>
    <ligand>
        <name>ATP</name>
        <dbReference type="ChEBI" id="CHEBI:30616"/>
    </ligand>
</feature>
<feature type="binding site" evidence="1">
    <location>
        <begin position="283"/>
        <end position="285"/>
    </location>
    <ligand>
        <name>ATP</name>
        <dbReference type="ChEBI" id="CHEBI:30616"/>
    </ligand>
</feature>
<feature type="binding site" evidence="1">
    <location>
        <begin position="331"/>
        <end position="335"/>
    </location>
    <ligand>
        <name>ATP</name>
        <dbReference type="ChEBI" id="CHEBI:30616"/>
    </ligand>
</feature>
<feature type="binding site" evidence="1">
    <location>
        <position position="385"/>
    </location>
    <ligand>
        <name>Mg(2+)</name>
        <dbReference type="ChEBI" id="CHEBI:18420"/>
    </ligand>
</feature>
<feature type="site" description="Transition state stabilizer" evidence="1">
    <location>
        <position position="180"/>
    </location>
</feature>
<feature type="site" description="Transition state stabilizer" evidence="1">
    <location>
        <position position="241"/>
    </location>
</feature>